<evidence type="ECO:0000250" key="1"/>
<evidence type="ECO:0000250" key="2">
    <source>
        <dbReference type="UniProtKB" id="Q90336"/>
    </source>
</evidence>
<evidence type="ECO:0000255" key="3">
    <source>
        <dbReference type="PROSITE-ProRule" id="PRU00159"/>
    </source>
</evidence>
<evidence type="ECO:0000269" key="4">
    <source>
    </source>
</evidence>
<evidence type="ECO:0000305" key="5"/>
<evidence type="ECO:0000312" key="6">
    <source>
        <dbReference type="EMBL" id="BAB11807.1"/>
    </source>
</evidence>
<protein>
    <recommendedName>
        <fullName>Mitogen-activated protein kinase 14A</fullName>
        <shortName>MAP kinase 14A</shortName>
        <shortName>MAPK 14A</shortName>
        <ecNumber>2.7.11.24</ecNumber>
    </recommendedName>
    <alternativeName>
        <fullName>Mitogen-activated protein kinase p38a</fullName>
        <shortName>MAP kinase p38a</shortName>
        <shortName>zp38a</shortName>
    </alternativeName>
</protein>
<dbReference type="EC" id="2.7.11.24"/>
<dbReference type="EMBL" id="AB030897">
    <property type="protein sequence ID" value="BAB11807.1"/>
    <property type="molecule type" value="mRNA"/>
</dbReference>
<dbReference type="EMBL" id="BC044128">
    <property type="protein sequence ID" value="AAH44128.2"/>
    <property type="molecule type" value="mRNA"/>
</dbReference>
<dbReference type="RefSeq" id="NP_571797.1">
    <property type="nucleotide sequence ID" value="NM_131722.1"/>
</dbReference>
<dbReference type="SMR" id="Q9DGE2"/>
<dbReference type="FunCoup" id="Q9DGE2">
    <property type="interactions" value="2421"/>
</dbReference>
<dbReference type="STRING" id="7955.ENSDARP00000040361"/>
<dbReference type="iPTMnet" id="Q9DGE2"/>
<dbReference type="PaxDb" id="7955-ENSDARP00000040361"/>
<dbReference type="Ensembl" id="ENSDART00000040362">
    <property type="protein sequence ID" value="ENSDARP00000040361"/>
    <property type="gene ID" value="ENSDARG00000000857"/>
</dbReference>
<dbReference type="Ensembl" id="ENSDART00000183020">
    <property type="protein sequence ID" value="ENSDARP00000153208"/>
    <property type="gene ID" value="ENSDARG00000112397"/>
</dbReference>
<dbReference type="GeneID" id="65237"/>
<dbReference type="KEGG" id="dre:65237"/>
<dbReference type="AGR" id="ZFIN:ZDB-GENE-010202-2"/>
<dbReference type="CTD" id="65237"/>
<dbReference type="ZFIN" id="ZDB-GENE-010202-2">
    <property type="gene designation" value="mapk14a"/>
</dbReference>
<dbReference type="eggNOG" id="KOG0660">
    <property type="taxonomic scope" value="Eukaryota"/>
</dbReference>
<dbReference type="HOGENOM" id="CLU_000288_181_1_1"/>
<dbReference type="InParanoid" id="Q9DGE2"/>
<dbReference type="OrthoDB" id="192887at2759"/>
<dbReference type="PhylomeDB" id="Q9DGE2"/>
<dbReference type="TreeFam" id="TF105100"/>
<dbReference type="BRENDA" id="2.7.11.24">
    <property type="organism ID" value="928"/>
</dbReference>
<dbReference type="SignaLink" id="Q9DGE2"/>
<dbReference type="PRO" id="PR:Q9DGE2"/>
<dbReference type="Proteomes" id="UP000000437">
    <property type="component" value="Alternate scaffold 8"/>
</dbReference>
<dbReference type="Proteomes" id="UP000000437">
    <property type="component" value="Chromosome 8"/>
</dbReference>
<dbReference type="Bgee" id="ENSDARG00000000857">
    <property type="expression patterns" value="Expressed in cleaving embryo and 27 other cell types or tissues"/>
</dbReference>
<dbReference type="ExpressionAtlas" id="Q9DGE2">
    <property type="expression patterns" value="baseline and differential"/>
</dbReference>
<dbReference type="GO" id="GO:0005737">
    <property type="term" value="C:cytoplasm"/>
    <property type="evidence" value="ECO:0000250"/>
    <property type="project" value="UniProtKB"/>
</dbReference>
<dbReference type="GO" id="GO:0005634">
    <property type="term" value="C:nucleus"/>
    <property type="evidence" value="ECO:0000250"/>
    <property type="project" value="UniProtKB"/>
</dbReference>
<dbReference type="GO" id="GO:0005524">
    <property type="term" value="F:ATP binding"/>
    <property type="evidence" value="ECO:0007669"/>
    <property type="project" value="UniProtKB-KW"/>
</dbReference>
<dbReference type="GO" id="GO:0004707">
    <property type="term" value="F:MAP kinase activity"/>
    <property type="evidence" value="ECO:0000314"/>
    <property type="project" value="UniProtKB"/>
</dbReference>
<dbReference type="GO" id="GO:0106310">
    <property type="term" value="F:protein serine kinase activity"/>
    <property type="evidence" value="ECO:0007669"/>
    <property type="project" value="RHEA"/>
</dbReference>
<dbReference type="GO" id="GO:0004674">
    <property type="term" value="F:protein serine/threonine kinase activity"/>
    <property type="evidence" value="ECO:0000318"/>
    <property type="project" value="GO_Central"/>
</dbReference>
<dbReference type="GO" id="GO:0034644">
    <property type="term" value="P:cellular response to UV"/>
    <property type="evidence" value="ECO:0000314"/>
    <property type="project" value="UniProtKB"/>
</dbReference>
<dbReference type="GO" id="GO:0040016">
    <property type="term" value="P:embryonic cleavage"/>
    <property type="evidence" value="ECO:0000314"/>
    <property type="project" value="UniProtKB"/>
</dbReference>
<dbReference type="GO" id="GO:0035556">
    <property type="term" value="P:intracellular signal transduction"/>
    <property type="evidence" value="ECO:0000318"/>
    <property type="project" value="GO_Central"/>
</dbReference>
<dbReference type="GO" id="GO:0038066">
    <property type="term" value="P:p38MAPK cascade"/>
    <property type="evidence" value="ECO:0000314"/>
    <property type="project" value="UniProtKB"/>
</dbReference>
<dbReference type="GO" id="GO:0045663">
    <property type="term" value="P:positive regulation of myoblast differentiation"/>
    <property type="evidence" value="ECO:0000250"/>
    <property type="project" value="UniProtKB"/>
</dbReference>
<dbReference type="GO" id="GO:1901741">
    <property type="term" value="P:positive regulation of myoblast fusion"/>
    <property type="evidence" value="ECO:0000250"/>
    <property type="project" value="UniProtKB"/>
</dbReference>
<dbReference type="GO" id="GO:0010831">
    <property type="term" value="P:positive regulation of myotube differentiation"/>
    <property type="evidence" value="ECO:0000250"/>
    <property type="project" value="UniProtKB"/>
</dbReference>
<dbReference type="GO" id="GO:0048696">
    <property type="term" value="P:regulation of collateral sprouting in absence of injury"/>
    <property type="evidence" value="ECO:0000315"/>
    <property type="project" value="ZFIN"/>
</dbReference>
<dbReference type="GO" id="GO:0031647">
    <property type="term" value="P:regulation of protein stability"/>
    <property type="evidence" value="ECO:0000315"/>
    <property type="project" value="ZFIN"/>
</dbReference>
<dbReference type="GO" id="GO:0006357">
    <property type="term" value="P:regulation of transcription by RNA polymerase II"/>
    <property type="evidence" value="ECO:0000250"/>
    <property type="project" value="UniProtKB"/>
</dbReference>
<dbReference type="GO" id="GO:0001756">
    <property type="term" value="P:somitogenesis"/>
    <property type="evidence" value="ECO:0000315"/>
    <property type="project" value="ZFIN"/>
</dbReference>
<dbReference type="CDD" id="cd07877">
    <property type="entry name" value="STKc_p38alpha"/>
    <property type="match status" value="1"/>
</dbReference>
<dbReference type="FunFam" id="1.10.510.10:FF:000063">
    <property type="entry name" value="Mitogen-activated protein kinase 14"/>
    <property type="match status" value="1"/>
</dbReference>
<dbReference type="FunFam" id="3.30.200.20:FF:000769">
    <property type="entry name" value="Mitogen-activated protein kinase 14"/>
    <property type="match status" value="1"/>
</dbReference>
<dbReference type="Gene3D" id="3.30.200.20">
    <property type="entry name" value="Phosphorylase Kinase, domain 1"/>
    <property type="match status" value="1"/>
</dbReference>
<dbReference type="Gene3D" id="1.10.510.10">
    <property type="entry name" value="Transferase(Phosphotransferase) domain 1"/>
    <property type="match status" value="1"/>
</dbReference>
<dbReference type="InterPro" id="IPR011009">
    <property type="entry name" value="Kinase-like_dom_sf"/>
</dbReference>
<dbReference type="InterPro" id="IPR050117">
    <property type="entry name" value="MAP_kinase"/>
</dbReference>
<dbReference type="InterPro" id="IPR003527">
    <property type="entry name" value="MAP_kinase_CS"/>
</dbReference>
<dbReference type="InterPro" id="IPR038784">
    <property type="entry name" value="MAPK14"/>
</dbReference>
<dbReference type="InterPro" id="IPR008352">
    <property type="entry name" value="MAPK_p38-like"/>
</dbReference>
<dbReference type="InterPro" id="IPR000719">
    <property type="entry name" value="Prot_kinase_dom"/>
</dbReference>
<dbReference type="InterPro" id="IPR017441">
    <property type="entry name" value="Protein_kinase_ATP_BS"/>
</dbReference>
<dbReference type="PANTHER" id="PTHR24055">
    <property type="entry name" value="MITOGEN-ACTIVATED PROTEIN KINASE"/>
    <property type="match status" value="1"/>
</dbReference>
<dbReference type="Pfam" id="PF00069">
    <property type="entry name" value="Pkinase"/>
    <property type="match status" value="1"/>
</dbReference>
<dbReference type="PRINTS" id="PR01773">
    <property type="entry name" value="P38MAPKINASE"/>
</dbReference>
<dbReference type="SMART" id="SM00220">
    <property type="entry name" value="S_TKc"/>
    <property type="match status" value="1"/>
</dbReference>
<dbReference type="SUPFAM" id="SSF56112">
    <property type="entry name" value="Protein kinase-like (PK-like)"/>
    <property type="match status" value="1"/>
</dbReference>
<dbReference type="PROSITE" id="PS01351">
    <property type="entry name" value="MAPK"/>
    <property type="match status" value="1"/>
</dbReference>
<dbReference type="PROSITE" id="PS00107">
    <property type="entry name" value="PROTEIN_KINASE_ATP"/>
    <property type="match status" value="1"/>
</dbReference>
<dbReference type="PROSITE" id="PS50011">
    <property type="entry name" value="PROTEIN_KINASE_DOM"/>
    <property type="match status" value="1"/>
</dbReference>
<proteinExistence type="evidence at protein level"/>
<feature type="chain" id="PRO_0000186295" description="Mitogen-activated protein kinase 14A">
    <location>
        <begin position="1"/>
        <end position="361"/>
    </location>
</feature>
<feature type="domain" description="Protein kinase" evidence="3">
    <location>
        <begin position="25"/>
        <end position="309"/>
    </location>
</feature>
<feature type="short sequence motif" description="TXY">
    <location>
        <begin position="181"/>
        <end position="183"/>
    </location>
</feature>
<feature type="active site" description="Proton acceptor" evidence="3">
    <location>
        <position position="169"/>
    </location>
</feature>
<feature type="binding site" evidence="3">
    <location>
        <begin position="31"/>
        <end position="39"/>
    </location>
    <ligand>
        <name>ATP</name>
        <dbReference type="ChEBI" id="CHEBI:30616"/>
    </ligand>
</feature>
<feature type="binding site" evidence="3">
    <location>
        <position position="54"/>
    </location>
    <ligand>
        <name>ATP</name>
        <dbReference type="ChEBI" id="CHEBI:30616"/>
    </ligand>
</feature>
<feature type="modified residue" description="Phosphothreonine; by MAP2K3" evidence="4">
    <location>
        <position position="181"/>
    </location>
</feature>
<feature type="modified residue" description="Phosphotyrosine; by MAP2K3" evidence="4">
    <location>
        <position position="183"/>
    </location>
</feature>
<feature type="mutagenesis site" description="Loss of enzyme activation." evidence="4">
    <original>T</original>
    <variation>A</variation>
    <location>
        <position position="181"/>
    </location>
</feature>
<feature type="mutagenesis site" description="Loss of enzyme activation." evidence="4">
    <original>Y</original>
    <variation>F</variation>
    <location>
        <position position="183"/>
    </location>
</feature>
<organism evidence="6">
    <name type="scientific">Danio rerio</name>
    <name type="common">Zebrafish</name>
    <name type="synonym">Brachydanio rerio</name>
    <dbReference type="NCBI Taxonomy" id="7955"/>
    <lineage>
        <taxon>Eukaryota</taxon>
        <taxon>Metazoa</taxon>
        <taxon>Chordata</taxon>
        <taxon>Craniata</taxon>
        <taxon>Vertebrata</taxon>
        <taxon>Euteleostomi</taxon>
        <taxon>Actinopterygii</taxon>
        <taxon>Neopterygii</taxon>
        <taxon>Teleostei</taxon>
        <taxon>Ostariophysi</taxon>
        <taxon>Cypriniformes</taxon>
        <taxon>Danionidae</taxon>
        <taxon>Danioninae</taxon>
        <taxon>Danio</taxon>
    </lineage>
</organism>
<name>MK14A_DANRE</name>
<comment type="function">
    <text evidence="4">Serine/threonine kinase which acts as an essential component of the MAP kinase signal transduction pathway. Mapk14a is one of the four p38 MAPKs which play an important role in the cascades of cellular responses evoked by extracellular stimuli such as pro-inflammatory cytokines or physical stress leading to direct activation of transcription factors. Accordingly, p38 MAPKs phosphorylate a broad range of proteins and it has been estimated that they may have approximately 200 to 300 substrates each. Some of the targets are downstream kinases which are activated through phosphorylation and further phosphorylate additional targets. Required for cytokinesis on the future dorsal side of the blastodisc, suggesting a role in symmetrical and synchronous blastomere cleavage.</text>
</comment>
<comment type="catalytic activity">
    <reaction evidence="2">
        <text>L-seryl-[protein] + ATP = O-phospho-L-seryl-[protein] + ADP + H(+)</text>
        <dbReference type="Rhea" id="RHEA:17989"/>
        <dbReference type="Rhea" id="RHEA-COMP:9863"/>
        <dbReference type="Rhea" id="RHEA-COMP:11604"/>
        <dbReference type="ChEBI" id="CHEBI:15378"/>
        <dbReference type="ChEBI" id="CHEBI:29999"/>
        <dbReference type="ChEBI" id="CHEBI:30616"/>
        <dbReference type="ChEBI" id="CHEBI:83421"/>
        <dbReference type="ChEBI" id="CHEBI:456216"/>
        <dbReference type="EC" id="2.7.11.24"/>
    </reaction>
</comment>
<comment type="catalytic activity">
    <reaction evidence="2">
        <text>L-threonyl-[protein] + ATP = O-phospho-L-threonyl-[protein] + ADP + H(+)</text>
        <dbReference type="Rhea" id="RHEA:46608"/>
        <dbReference type="Rhea" id="RHEA-COMP:11060"/>
        <dbReference type="Rhea" id="RHEA-COMP:11605"/>
        <dbReference type="ChEBI" id="CHEBI:15378"/>
        <dbReference type="ChEBI" id="CHEBI:30013"/>
        <dbReference type="ChEBI" id="CHEBI:30616"/>
        <dbReference type="ChEBI" id="CHEBI:61977"/>
        <dbReference type="ChEBI" id="CHEBI:456216"/>
        <dbReference type="EC" id="2.7.11.24"/>
    </reaction>
</comment>
<comment type="cofactor">
    <cofactor evidence="2">
        <name>Mg(2+)</name>
        <dbReference type="ChEBI" id="CHEBI:18420"/>
    </cofactor>
</comment>
<comment type="activity regulation">
    <text evidence="4">Activated by threonine and tyrosine phosphorylation by the dual specificity kinase, MKK3.</text>
</comment>
<comment type="subcellular location">
    <subcellularLocation>
        <location evidence="1">Cytoplasm</location>
    </subcellularLocation>
    <subcellularLocation>
        <location evidence="1">Nucleus</location>
    </subcellularLocation>
</comment>
<comment type="developmental stage">
    <text evidence="4">Expressed as the predominant form of mapk14 both maternally and zygotically throughout development.</text>
</comment>
<comment type="domain">
    <text>The TXY motif contains the threonine and tyrosine residues whose phosphorylation activates the MAP kinases.</text>
</comment>
<comment type="PTM">
    <text evidence="4">Dually phosphorylated on Thr-181 and Tyr-183, which activates the enzyme.</text>
</comment>
<comment type="similarity">
    <text evidence="5">Belongs to the protein kinase superfamily. CMGC Ser/Thr protein kinase family. MAP kinase subfamily.</text>
</comment>
<keyword id="KW-0067">ATP-binding</keyword>
<keyword id="KW-0963">Cytoplasm</keyword>
<keyword id="KW-0217">Developmental protein</keyword>
<keyword id="KW-0418">Kinase</keyword>
<keyword id="KW-0547">Nucleotide-binding</keyword>
<keyword id="KW-0539">Nucleus</keyword>
<keyword id="KW-0597">Phosphoprotein</keyword>
<keyword id="KW-1185">Reference proteome</keyword>
<keyword id="KW-0723">Serine/threonine-protein kinase</keyword>
<keyword id="KW-0346">Stress response</keyword>
<keyword id="KW-0804">Transcription</keyword>
<keyword id="KW-0805">Transcription regulation</keyword>
<keyword id="KW-0808">Transferase</keyword>
<reference evidence="5" key="1">
    <citation type="journal article" date="2000" name="J. Cell Biol.">
        <title>Asymmetric p38 activation in zebrafish: its possible role in symmetric and synchronous cleavage.</title>
        <authorList>
            <person name="Fujii R."/>
            <person name="Yamashita S."/>
            <person name="Hibi M."/>
            <person name="Hirano T."/>
        </authorList>
    </citation>
    <scope>NUCLEOTIDE SEQUENCE [MRNA]</scope>
    <scope>FUNCTION</scope>
    <scope>ACTIVITY REGULATION</scope>
    <scope>PHOSPHORYLATION AT THR-181 AND TYR-183</scope>
    <scope>DEVELOPMENTAL STAGE</scope>
    <scope>MUTAGENESIS OF THR-181 AND TYR-183</scope>
</reference>
<reference key="2">
    <citation type="submission" date="2003-01" db="EMBL/GenBank/DDBJ databases">
        <authorList>
            <consortium name="NIH - Zebrafish Gene Collection (ZGC) project"/>
        </authorList>
    </citation>
    <scope>NUCLEOTIDE SEQUENCE [LARGE SCALE MRNA]</scope>
    <source>
        <strain>AB</strain>
    </source>
</reference>
<gene>
    <name type="primary">mapk14a</name>
    <name type="synonym">mapk14</name>
</gene>
<sequence>MSQKERPTFYRQEVNKTIWEVPVQYQNLSPVGSGAYGSVCSAFDAKTGFKVAVKKLSRPFQSIIHAKRTYRELRLLKHMRHENVIGLLDVFTPATSLKEFNDVYLVTHLMGADLNNIVKCQKLTDDHVQFLIYQILRGLKYIHSADIIHRDLKPSNLAVNEDCELKILDFGLARHTDDEMTGYVATRWYRAPEIMLNWMHYNVTVDIWSVGCIMAELLTGRTLFPGTDHINQLQQIMRLTGTPPSSLISRMPSHEARTYISSLPQMPKRNFADVFIGANPQAVDLLEKMLVLDTDKRITAAEALAHPYFAQYHDPDDEPEAEPFDQSFESRELDIEEWKRQTYEEMISFEPPVFDVDEMES</sequence>
<accession>Q9DGE2</accession>